<sequence length="517" mass="55241">MAGGVIVANDGDGSAVDHGGRLTFSVVITCLVAASGGLIFGYDVGISGGVSTMEPFLRRFFPGVVRRMAEARPGNEYCVYDSQALTAFTSSLYVAGLVASLVASRVTRAMGRQAVMVMGGALFFAGGAVTGFAVNIAMLIVGRMLLGFGVGFTNQAAPLFLAEMAPTRWRGSLTAGFQFFLAVGVVIATVTNYFASRVPWGWRLSLGLAGAPAVVIFLGALFLTDTPSSLVMRGDTARARAALLRVRGAGADVEAELKGIVRAVEVARQGEDGAFRRMAARREYRPYLVFAVAMPMFFQLTGVIVISFFSPLVFRTVGFGSNAALMGNVILGAVNLVCLMLSTLVIDRYGRKVLFMVGGAIMIIAQVGVAWIMGAQVGKNGSEAMARPYAVAVVAFTCLHTAGFGWSWGPLGWVIPGEIFPVDIRSAGQAMNVSIGLGLTFVQTQSFLAMLCRFRYGTFAYYAAWVAVMTVFIAVFLPETKGVPLESMATVWARHWYWKRFAREQPKTSADEPTGTY</sequence>
<proteinExistence type="evidence at transcript level"/>
<accession>Q0JCR9</accession>
<accession>Q7XMZ1</accession>
<accession>Q7XMZ2</accession>
<accession>Q9FRT7</accession>
<comment type="function">
    <text evidence="1">Mediates active uptake of hexoses by sugar:proton symport.</text>
</comment>
<comment type="subcellular location">
    <subcellularLocation>
        <location evidence="2">Membrane</location>
        <topology evidence="2">Multi-pass membrane protein</topology>
    </subcellularLocation>
</comment>
<comment type="similarity">
    <text evidence="4">Belongs to the major facilitator superfamily. Sugar transporter (TC 2.A.1.1) family.</text>
</comment>
<comment type="sequence caution" evidence="4">
    <conflict type="frameshift">
        <sequence resource="EMBL-CDS" id="BAB19862"/>
    </conflict>
</comment>
<comment type="sequence caution" evidence="4">
    <conflict type="erroneous gene model prediction">
        <sequence resource="EMBL-CDS" id="CAE04368"/>
    </conflict>
    <text>Was originally thought to correspond to two different genes.</text>
</comment>
<comment type="sequence caution" evidence="4">
    <conflict type="erroneous gene model prediction">
        <sequence resource="EMBL-CDS" id="CAE04369"/>
    </conflict>
    <text>Was originally thought to correspond to two different genes.</text>
</comment>
<evidence type="ECO:0000250" key="1">
    <source>
        <dbReference type="UniProtKB" id="Q7EZD7"/>
    </source>
</evidence>
<evidence type="ECO:0000255" key="2"/>
<evidence type="ECO:0000303" key="3">
    <source>
    </source>
</evidence>
<evidence type="ECO:0000305" key="4"/>
<evidence type="ECO:0000312" key="5">
    <source>
        <dbReference type="EMBL" id="BAF14868.1"/>
    </source>
</evidence>
<evidence type="ECO:0000312" key="6">
    <source>
        <dbReference type="EMBL" id="CAE04368.1"/>
    </source>
</evidence>
<evidence type="ECO:0000312" key="7">
    <source>
        <dbReference type="EMBL" id="CAE04369.1"/>
    </source>
</evidence>
<evidence type="ECO:0000312" key="8">
    <source>
        <dbReference type="EMBL" id="EEE56539.1"/>
    </source>
</evidence>
<keyword id="KW-0472">Membrane</keyword>
<keyword id="KW-1185">Reference proteome</keyword>
<keyword id="KW-0762">Sugar transport</keyword>
<keyword id="KW-0769">Symport</keyword>
<keyword id="KW-0812">Transmembrane</keyword>
<keyword id="KW-1133">Transmembrane helix</keyword>
<keyword id="KW-0813">Transport</keyword>
<dbReference type="EMBL" id="AL662937">
    <property type="protein sequence ID" value="CAE04368.1"/>
    <property type="status" value="ALT_SEQ"/>
    <property type="molecule type" value="Genomic_DNA"/>
</dbReference>
<dbReference type="EMBL" id="AL662937">
    <property type="protein sequence ID" value="CAE04369.1"/>
    <property type="status" value="ALT_SEQ"/>
    <property type="molecule type" value="Genomic_DNA"/>
</dbReference>
<dbReference type="EMBL" id="AB052883">
    <property type="protein sequence ID" value="BAB19862.1"/>
    <property type="status" value="ALT_FRAME"/>
    <property type="molecule type" value="mRNA"/>
</dbReference>
<dbReference type="EMBL" id="AP008210">
    <property type="protein sequence ID" value="BAF14868.1"/>
    <property type="molecule type" value="Genomic_DNA"/>
</dbReference>
<dbReference type="EMBL" id="AP014960">
    <property type="protein sequence ID" value="BAS89476.1"/>
    <property type="molecule type" value="Genomic_DNA"/>
</dbReference>
<dbReference type="EMBL" id="CM000139">
    <property type="protein sequence ID" value="EEE56539.1"/>
    <property type="molecule type" value="Genomic_DNA"/>
</dbReference>
<dbReference type="SMR" id="Q0JCR9"/>
<dbReference type="FunCoup" id="Q0JCR9">
    <property type="interactions" value="102"/>
</dbReference>
<dbReference type="STRING" id="39947.Q0JCR9"/>
<dbReference type="PaxDb" id="39947-Q0JCR9"/>
<dbReference type="EnsemblPlants" id="Os04t0452700-01">
    <property type="protein sequence ID" value="Os04t0452700-01"/>
    <property type="gene ID" value="Os04g0452700"/>
</dbReference>
<dbReference type="Gramene" id="Os04t0452700-01">
    <property type="protein sequence ID" value="Os04t0452700-01"/>
    <property type="gene ID" value="Os04g0452700"/>
</dbReference>
<dbReference type="KEGG" id="dosa:Os04g0452700"/>
<dbReference type="KEGG" id="osa:4336012"/>
<dbReference type="eggNOG" id="KOG0254">
    <property type="taxonomic scope" value="Eukaryota"/>
</dbReference>
<dbReference type="HOGENOM" id="CLU_001265_30_5_1"/>
<dbReference type="InParanoid" id="Q0JCR9"/>
<dbReference type="OMA" id="TIVTWWL"/>
<dbReference type="OrthoDB" id="5296287at2759"/>
<dbReference type="Proteomes" id="UP000000763">
    <property type="component" value="Chromosome 4"/>
</dbReference>
<dbReference type="Proteomes" id="UP000007752">
    <property type="component" value="Chromosome 2"/>
</dbReference>
<dbReference type="Proteomes" id="UP000059680">
    <property type="component" value="Chromosome 4"/>
</dbReference>
<dbReference type="GO" id="GO:0016020">
    <property type="term" value="C:membrane"/>
    <property type="evidence" value="ECO:0007669"/>
    <property type="project" value="UniProtKB-SubCell"/>
</dbReference>
<dbReference type="GO" id="GO:0015145">
    <property type="term" value="F:monosaccharide transmembrane transporter activity"/>
    <property type="evidence" value="ECO:0007669"/>
    <property type="project" value="InterPro"/>
</dbReference>
<dbReference type="GO" id="GO:0015293">
    <property type="term" value="F:symporter activity"/>
    <property type="evidence" value="ECO:0007669"/>
    <property type="project" value="UniProtKB-KW"/>
</dbReference>
<dbReference type="CDD" id="cd17361">
    <property type="entry name" value="MFS_STP"/>
    <property type="match status" value="1"/>
</dbReference>
<dbReference type="FunFam" id="1.20.1250.20:FF:000002">
    <property type="entry name" value="Sugar transport protein 13"/>
    <property type="match status" value="1"/>
</dbReference>
<dbReference type="Gene3D" id="1.20.1250.20">
    <property type="entry name" value="MFS general substrate transporter like domains"/>
    <property type="match status" value="1"/>
</dbReference>
<dbReference type="InterPro" id="IPR020846">
    <property type="entry name" value="MFS_dom"/>
</dbReference>
<dbReference type="InterPro" id="IPR044778">
    <property type="entry name" value="MFS_STP/MST-like_plant"/>
</dbReference>
<dbReference type="InterPro" id="IPR005828">
    <property type="entry name" value="MFS_sugar_transport-like"/>
</dbReference>
<dbReference type="InterPro" id="IPR036259">
    <property type="entry name" value="MFS_trans_sf"/>
</dbReference>
<dbReference type="InterPro" id="IPR045262">
    <property type="entry name" value="STP/PLT_plant"/>
</dbReference>
<dbReference type="InterPro" id="IPR003663">
    <property type="entry name" value="Sugar/inositol_transpt"/>
</dbReference>
<dbReference type="InterPro" id="IPR005829">
    <property type="entry name" value="Sugar_transporter_CS"/>
</dbReference>
<dbReference type="NCBIfam" id="TIGR00879">
    <property type="entry name" value="SP"/>
    <property type="match status" value="1"/>
</dbReference>
<dbReference type="PANTHER" id="PTHR23500">
    <property type="entry name" value="SOLUTE CARRIER FAMILY 2, FACILITATED GLUCOSE TRANSPORTER"/>
    <property type="match status" value="1"/>
</dbReference>
<dbReference type="PANTHER" id="PTHR23500:SF73">
    <property type="entry name" value="SUGAR TRANSPORT PROTEIN MST1"/>
    <property type="match status" value="1"/>
</dbReference>
<dbReference type="Pfam" id="PF00083">
    <property type="entry name" value="Sugar_tr"/>
    <property type="match status" value="1"/>
</dbReference>
<dbReference type="PRINTS" id="PR00171">
    <property type="entry name" value="SUGRTRNSPORT"/>
</dbReference>
<dbReference type="SUPFAM" id="SSF103473">
    <property type="entry name" value="MFS general substrate transporter"/>
    <property type="match status" value="1"/>
</dbReference>
<dbReference type="PROSITE" id="PS50850">
    <property type="entry name" value="MFS"/>
    <property type="match status" value="1"/>
</dbReference>
<dbReference type="PROSITE" id="PS00217">
    <property type="entry name" value="SUGAR_TRANSPORT_2"/>
    <property type="match status" value="1"/>
</dbReference>
<gene>
    <name evidence="3" type="primary">MST1</name>
    <name evidence="5" type="ordered locus">Os04g0452700</name>
    <name evidence="4" type="ordered locus">LOC_Os04g37980</name>
    <name evidence="8" type="ORF">OsJ_05845</name>
    <name evidence="6" type="ORF">OSJNBa0027G07.3</name>
    <name evidence="7" type="ORF">OSJNBa0027G07.4</name>
</gene>
<feature type="chain" id="PRO_0000441035" description="Sugar transport protein MST1">
    <location>
        <begin position="1"/>
        <end position="517"/>
    </location>
</feature>
<feature type="topological domain" description="Cytoplasmic" evidence="4">
    <location>
        <begin position="1"/>
        <end position="25"/>
    </location>
</feature>
<feature type="transmembrane region" description="Helical" evidence="2">
    <location>
        <begin position="26"/>
        <end position="46"/>
    </location>
</feature>
<feature type="topological domain" description="Extracellular" evidence="4">
    <location>
        <begin position="47"/>
        <end position="83"/>
    </location>
</feature>
<feature type="transmembrane region" description="Helical" evidence="2">
    <location>
        <begin position="84"/>
        <end position="104"/>
    </location>
</feature>
<feature type="topological domain" description="Cytoplasmic" evidence="4">
    <location>
        <begin position="105"/>
        <end position="120"/>
    </location>
</feature>
<feature type="transmembrane region" description="Helical" evidence="2">
    <location>
        <begin position="121"/>
        <end position="141"/>
    </location>
</feature>
<feature type="topological domain" description="Extracellular" evidence="4">
    <location>
        <begin position="142"/>
        <end position="143"/>
    </location>
</feature>
<feature type="transmembrane region" description="Helical" evidence="2">
    <location>
        <begin position="144"/>
        <end position="164"/>
    </location>
</feature>
<feature type="topological domain" description="Cytoplasmic" evidence="4">
    <location>
        <begin position="165"/>
        <end position="170"/>
    </location>
</feature>
<feature type="transmembrane region" description="Helical" evidence="2">
    <location>
        <begin position="171"/>
        <end position="191"/>
    </location>
</feature>
<feature type="topological domain" description="Extracellular" evidence="4">
    <location>
        <begin position="192"/>
        <end position="203"/>
    </location>
</feature>
<feature type="transmembrane region" description="Helical" evidence="2">
    <location>
        <begin position="204"/>
        <end position="224"/>
    </location>
</feature>
<feature type="topological domain" description="Cytoplasmic" evidence="4">
    <location>
        <begin position="225"/>
        <end position="288"/>
    </location>
</feature>
<feature type="transmembrane region" description="Helical" evidence="2">
    <location>
        <begin position="289"/>
        <end position="309"/>
    </location>
</feature>
<feature type="topological domain" description="Extracellular" evidence="4">
    <location>
        <begin position="310"/>
        <end position="325"/>
    </location>
</feature>
<feature type="transmembrane region" description="Helical" evidence="2">
    <location>
        <begin position="326"/>
        <end position="346"/>
    </location>
</feature>
<feature type="topological domain" description="Cytoplasmic" evidence="4">
    <location>
        <begin position="347"/>
        <end position="352"/>
    </location>
</feature>
<feature type="transmembrane region" description="Helical" evidence="2">
    <location>
        <begin position="353"/>
        <end position="373"/>
    </location>
</feature>
<feature type="topological domain" description="Extracellular" evidence="4">
    <location>
        <begin position="374"/>
        <end position="389"/>
    </location>
</feature>
<feature type="transmembrane region" description="Helical" evidence="2">
    <location>
        <begin position="390"/>
        <end position="410"/>
    </location>
</feature>
<feature type="topological domain" description="Cytoplasmic" evidence="4">
    <location>
        <begin position="411"/>
        <end position="430"/>
    </location>
</feature>
<feature type="transmembrane region" description="Helical" evidence="2">
    <location>
        <begin position="431"/>
        <end position="451"/>
    </location>
</feature>
<feature type="topological domain" description="Extracellular" evidence="4">
    <location>
        <begin position="452"/>
        <end position="456"/>
    </location>
</feature>
<feature type="transmembrane region" description="Helical" evidence="2">
    <location>
        <begin position="457"/>
        <end position="477"/>
    </location>
</feature>
<feature type="topological domain" description="Cytoplasmic" evidence="4">
    <location>
        <begin position="478"/>
        <end position="517"/>
    </location>
</feature>
<feature type="sequence conflict" description="In Ref. 1; BAB19862." evidence="4" ref="1">
    <original>Y</original>
    <variation>N</variation>
    <location>
        <position position="287"/>
    </location>
</feature>
<protein>
    <recommendedName>
        <fullName evidence="4">Sugar transport protein MST1</fullName>
    </recommendedName>
    <alternativeName>
        <fullName evidence="3">Monosaccharide transporter 1</fullName>
        <shortName evidence="3">OsMST1</shortName>
    </alternativeName>
    <alternativeName>
        <fullName evidence="4">Sugar:proton symporter MST1</fullName>
    </alternativeName>
</protein>
<organism>
    <name type="scientific">Oryza sativa subsp. japonica</name>
    <name type="common">Rice</name>
    <dbReference type="NCBI Taxonomy" id="39947"/>
    <lineage>
        <taxon>Eukaryota</taxon>
        <taxon>Viridiplantae</taxon>
        <taxon>Streptophyta</taxon>
        <taxon>Embryophyta</taxon>
        <taxon>Tracheophyta</taxon>
        <taxon>Spermatophyta</taxon>
        <taxon>Magnoliopsida</taxon>
        <taxon>Liliopsida</taxon>
        <taxon>Poales</taxon>
        <taxon>Poaceae</taxon>
        <taxon>BOP clade</taxon>
        <taxon>Oryzoideae</taxon>
        <taxon>Oryzeae</taxon>
        <taxon>Oryzinae</taxon>
        <taxon>Oryza</taxon>
        <taxon>Oryza sativa</taxon>
    </lineage>
</organism>
<reference key="1">
    <citation type="journal article" date="2000" name="Plant Cell Physiol.">
        <title>Characterization and expression of monosaccharide transporters (osMSTs) in rice.</title>
        <authorList>
            <person name="Toyofuku K."/>
            <person name="Kasahara M."/>
            <person name="Yamaguchi J."/>
        </authorList>
    </citation>
    <scope>NUCLEOTIDE SEQUENCE [MRNA]</scope>
</reference>
<reference key="2">
    <citation type="journal article" date="2002" name="Nature">
        <title>Sequence and analysis of rice chromosome 4.</title>
        <authorList>
            <person name="Feng Q."/>
            <person name="Zhang Y."/>
            <person name="Hao P."/>
            <person name="Wang S."/>
            <person name="Fu G."/>
            <person name="Huang Y."/>
            <person name="Li Y."/>
            <person name="Zhu J."/>
            <person name="Liu Y."/>
            <person name="Hu X."/>
            <person name="Jia P."/>
            <person name="Zhang Y."/>
            <person name="Zhao Q."/>
            <person name="Ying K."/>
            <person name="Yu S."/>
            <person name="Tang Y."/>
            <person name="Weng Q."/>
            <person name="Zhang L."/>
            <person name="Lu Y."/>
            <person name="Mu J."/>
            <person name="Lu Y."/>
            <person name="Zhang L.S."/>
            <person name="Yu Z."/>
            <person name="Fan D."/>
            <person name="Liu X."/>
            <person name="Lu T."/>
            <person name="Li C."/>
            <person name="Wu Y."/>
            <person name="Sun T."/>
            <person name="Lei H."/>
            <person name="Li T."/>
            <person name="Hu H."/>
            <person name="Guan J."/>
            <person name="Wu M."/>
            <person name="Zhang R."/>
            <person name="Zhou B."/>
            <person name="Chen Z."/>
            <person name="Chen L."/>
            <person name="Jin Z."/>
            <person name="Wang R."/>
            <person name="Yin H."/>
            <person name="Cai Z."/>
            <person name="Ren S."/>
            <person name="Lv G."/>
            <person name="Gu W."/>
            <person name="Zhu G."/>
            <person name="Tu Y."/>
            <person name="Jia J."/>
            <person name="Zhang Y."/>
            <person name="Chen J."/>
            <person name="Kang H."/>
            <person name="Chen X."/>
            <person name="Shao C."/>
            <person name="Sun Y."/>
            <person name="Hu Q."/>
            <person name="Zhang X."/>
            <person name="Zhang W."/>
            <person name="Wang L."/>
            <person name="Ding C."/>
            <person name="Sheng H."/>
            <person name="Gu J."/>
            <person name="Chen S."/>
            <person name="Ni L."/>
            <person name="Zhu F."/>
            <person name="Chen W."/>
            <person name="Lan L."/>
            <person name="Lai Y."/>
            <person name="Cheng Z."/>
            <person name="Gu M."/>
            <person name="Jiang J."/>
            <person name="Li J."/>
            <person name="Hong G."/>
            <person name="Xue Y."/>
            <person name="Han B."/>
        </authorList>
    </citation>
    <scope>NUCLEOTIDE SEQUENCE [LARGE SCALE GENOMIC DNA]</scope>
    <source>
        <strain>cv. Nipponbare</strain>
    </source>
</reference>
<reference key="3">
    <citation type="journal article" date="2005" name="Nature">
        <title>The map-based sequence of the rice genome.</title>
        <authorList>
            <consortium name="International rice genome sequencing project (IRGSP)"/>
        </authorList>
    </citation>
    <scope>NUCLEOTIDE SEQUENCE [LARGE SCALE GENOMIC DNA]</scope>
    <source>
        <strain>cv. Nipponbare</strain>
    </source>
</reference>
<reference key="4">
    <citation type="journal article" date="2008" name="Nucleic Acids Res.">
        <title>The rice annotation project database (RAP-DB): 2008 update.</title>
        <authorList>
            <consortium name="The rice annotation project (RAP)"/>
        </authorList>
    </citation>
    <scope>GENOME REANNOTATION</scope>
    <source>
        <strain>cv. Nipponbare</strain>
    </source>
</reference>
<reference key="5">
    <citation type="journal article" date="2013" name="Rice">
        <title>Improvement of the Oryza sativa Nipponbare reference genome using next generation sequence and optical map data.</title>
        <authorList>
            <person name="Kawahara Y."/>
            <person name="de la Bastide M."/>
            <person name="Hamilton J.P."/>
            <person name="Kanamori H."/>
            <person name="McCombie W.R."/>
            <person name="Ouyang S."/>
            <person name="Schwartz D.C."/>
            <person name="Tanaka T."/>
            <person name="Wu J."/>
            <person name="Zhou S."/>
            <person name="Childs K.L."/>
            <person name="Davidson R.M."/>
            <person name="Lin H."/>
            <person name="Quesada-Ocampo L."/>
            <person name="Vaillancourt B."/>
            <person name="Sakai H."/>
            <person name="Lee S.S."/>
            <person name="Kim J."/>
            <person name="Numa H."/>
            <person name="Itoh T."/>
            <person name="Buell C.R."/>
            <person name="Matsumoto T."/>
        </authorList>
    </citation>
    <scope>GENOME REANNOTATION</scope>
    <source>
        <strain>cv. Nipponbare</strain>
    </source>
</reference>
<reference key="6">
    <citation type="journal article" date="2005" name="PLoS Biol.">
        <title>The genomes of Oryza sativa: a history of duplications.</title>
        <authorList>
            <person name="Yu J."/>
            <person name="Wang J."/>
            <person name="Lin W."/>
            <person name="Li S."/>
            <person name="Li H."/>
            <person name="Zhou J."/>
            <person name="Ni P."/>
            <person name="Dong W."/>
            <person name="Hu S."/>
            <person name="Zeng C."/>
            <person name="Zhang J."/>
            <person name="Zhang Y."/>
            <person name="Li R."/>
            <person name="Xu Z."/>
            <person name="Li S."/>
            <person name="Li X."/>
            <person name="Zheng H."/>
            <person name="Cong L."/>
            <person name="Lin L."/>
            <person name="Yin J."/>
            <person name="Geng J."/>
            <person name="Li G."/>
            <person name="Shi J."/>
            <person name="Liu J."/>
            <person name="Lv H."/>
            <person name="Li J."/>
            <person name="Wang J."/>
            <person name="Deng Y."/>
            <person name="Ran L."/>
            <person name="Shi X."/>
            <person name="Wang X."/>
            <person name="Wu Q."/>
            <person name="Li C."/>
            <person name="Ren X."/>
            <person name="Wang J."/>
            <person name="Wang X."/>
            <person name="Li D."/>
            <person name="Liu D."/>
            <person name="Zhang X."/>
            <person name="Ji Z."/>
            <person name="Zhao W."/>
            <person name="Sun Y."/>
            <person name="Zhang Z."/>
            <person name="Bao J."/>
            <person name="Han Y."/>
            <person name="Dong L."/>
            <person name="Ji J."/>
            <person name="Chen P."/>
            <person name="Wu S."/>
            <person name="Liu J."/>
            <person name="Xiao Y."/>
            <person name="Bu D."/>
            <person name="Tan J."/>
            <person name="Yang L."/>
            <person name="Ye C."/>
            <person name="Zhang J."/>
            <person name="Xu J."/>
            <person name="Zhou Y."/>
            <person name="Yu Y."/>
            <person name="Zhang B."/>
            <person name="Zhuang S."/>
            <person name="Wei H."/>
            <person name="Liu B."/>
            <person name="Lei M."/>
            <person name="Yu H."/>
            <person name="Li Y."/>
            <person name="Xu H."/>
            <person name="Wei S."/>
            <person name="He X."/>
            <person name="Fang L."/>
            <person name="Zhang Z."/>
            <person name="Zhang Y."/>
            <person name="Huang X."/>
            <person name="Su Z."/>
            <person name="Tong W."/>
            <person name="Li J."/>
            <person name="Tong Z."/>
            <person name="Li S."/>
            <person name="Ye J."/>
            <person name="Wang L."/>
            <person name="Fang L."/>
            <person name="Lei T."/>
            <person name="Chen C.-S."/>
            <person name="Chen H.-C."/>
            <person name="Xu Z."/>
            <person name="Li H."/>
            <person name="Huang H."/>
            <person name="Zhang F."/>
            <person name="Xu H."/>
            <person name="Li N."/>
            <person name="Zhao C."/>
            <person name="Li S."/>
            <person name="Dong L."/>
            <person name="Huang Y."/>
            <person name="Li L."/>
            <person name="Xi Y."/>
            <person name="Qi Q."/>
            <person name="Li W."/>
            <person name="Zhang B."/>
            <person name="Hu W."/>
            <person name="Zhang Y."/>
            <person name="Tian X."/>
            <person name="Jiao Y."/>
            <person name="Liang X."/>
            <person name="Jin J."/>
            <person name="Gao L."/>
            <person name="Zheng W."/>
            <person name="Hao B."/>
            <person name="Liu S.-M."/>
            <person name="Wang W."/>
            <person name="Yuan L."/>
            <person name="Cao M."/>
            <person name="McDermott J."/>
            <person name="Samudrala R."/>
            <person name="Wang J."/>
            <person name="Wong G.K.-S."/>
            <person name="Yang H."/>
        </authorList>
    </citation>
    <scope>NUCLEOTIDE SEQUENCE [LARGE SCALE GENOMIC DNA]</scope>
    <source>
        <strain>cv. Nipponbare</strain>
    </source>
</reference>
<name>MST1_ORYSJ</name>